<protein>
    <recommendedName>
        <fullName evidence="1">Thymidylate kinase</fullName>
        <ecNumber evidence="1">2.7.4.9</ecNumber>
    </recommendedName>
    <alternativeName>
        <fullName evidence="1">dTMP kinase</fullName>
    </alternativeName>
</protein>
<organism>
    <name type="scientific">Leifsonia xyli subsp. xyli (strain CTCB07)</name>
    <dbReference type="NCBI Taxonomy" id="281090"/>
    <lineage>
        <taxon>Bacteria</taxon>
        <taxon>Bacillati</taxon>
        <taxon>Actinomycetota</taxon>
        <taxon>Actinomycetes</taxon>
        <taxon>Micrococcales</taxon>
        <taxon>Microbacteriaceae</taxon>
        <taxon>Leifsonia</taxon>
    </lineage>
</organism>
<dbReference type="EC" id="2.7.4.9" evidence="1"/>
<dbReference type="EMBL" id="AE016822">
    <property type="protein sequence ID" value="AAT88410.1"/>
    <property type="molecule type" value="Genomic_DNA"/>
</dbReference>
<dbReference type="RefSeq" id="WP_011185412.1">
    <property type="nucleotide sequence ID" value="NC_006087.1"/>
</dbReference>
<dbReference type="SMR" id="Q6AGT5"/>
<dbReference type="STRING" id="281090.Lxx04070"/>
<dbReference type="KEGG" id="lxx:Lxx04070"/>
<dbReference type="eggNOG" id="COG0125">
    <property type="taxonomic scope" value="Bacteria"/>
</dbReference>
<dbReference type="HOGENOM" id="CLU_049131_0_2_11"/>
<dbReference type="Proteomes" id="UP000001306">
    <property type="component" value="Chromosome"/>
</dbReference>
<dbReference type="GO" id="GO:0005829">
    <property type="term" value="C:cytosol"/>
    <property type="evidence" value="ECO:0007669"/>
    <property type="project" value="TreeGrafter"/>
</dbReference>
<dbReference type="GO" id="GO:0005524">
    <property type="term" value="F:ATP binding"/>
    <property type="evidence" value="ECO:0007669"/>
    <property type="project" value="UniProtKB-UniRule"/>
</dbReference>
<dbReference type="GO" id="GO:0004798">
    <property type="term" value="F:dTMP kinase activity"/>
    <property type="evidence" value="ECO:0007669"/>
    <property type="project" value="UniProtKB-UniRule"/>
</dbReference>
<dbReference type="GO" id="GO:0006233">
    <property type="term" value="P:dTDP biosynthetic process"/>
    <property type="evidence" value="ECO:0007669"/>
    <property type="project" value="InterPro"/>
</dbReference>
<dbReference type="GO" id="GO:0006235">
    <property type="term" value="P:dTTP biosynthetic process"/>
    <property type="evidence" value="ECO:0007669"/>
    <property type="project" value="UniProtKB-UniRule"/>
</dbReference>
<dbReference type="GO" id="GO:0006227">
    <property type="term" value="P:dUDP biosynthetic process"/>
    <property type="evidence" value="ECO:0007669"/>
    <property type="project" value="TreeGrafter"/>
</dbReference>
<dbReference type="CDD" id="cd01672">
    <property type="entry name" value="TMPK"/>
    <property type="match status" value="1"/>
</dbReference>
<dbReference type="FunFam" id="3.40.50.300:FF:000225">
    <property type="entry name" value="Thymidylate kinase"/>
    <property type="match status" value="1"/>
</dbReference>
<dbReference type="Gene3D" id="3.40.50.300">
    <property type="entry name" value="P-loop containing nucleotide triphosphate hydrolases"/>
    <property type="match status" value="1"/>
</dbReference>
<dbReference type="HAMAP" id="MF_00165">
    <property type="entry name" value="Thymidylate_kinase"/>
    <property type="match status" value="1"/>
</dbReference>
<dbReference type="InterPro" id="IPR027417">
    <property type="entry name" value="P-loop_NTPase"/>
</dbReference>
<dbReference type="InterPro" id="IPR039430">
    <property type="entry name" value="Thymidylate_kin-like_dom"/>
</dbReference>
<dbReference type="InterPro" id="IPR018094">
    <property type="entry name" value="Thymidylate_kinase"/>
</dbReference>
<dbReference type="NCBIfam" id="TIGR00041">
    <property type="entry name" value="DTMP_kinase"/>
    <property type="match status" value="1"/>
</dbReference>
<dbReference type="PANTHER" id="PTHR10344">
    <property type="entry name" value="THYMIDYLATE KINASE"/>
    <property type="match status" value="1"/>
</dbReference>
<dbReference type="PANTHER" id="PTHR10344:SF4">
    <property type="entry name" value="UMP-CMP KINASE 2, MITOCHONDRIAL"/>
    <property type="match status" value="1"/>
</dbReference>
<dbReference type="Pfam" id="PF02223">
    <property type="entry name" value="Thymidylate_kin"/>
    <property type="match status" value="1"/>
</dbReference>
<dbReference type="SUPFAM" id="SSF52540">
    <property type="entry name" value="P-loop containing nucleoside triphosphate hydrolases"/>
    <property type="match status" value="1"/>
</dbReference>
<evidence type="ECO:0000255" key="1">
    <source>
        <dbReference type="HAMAP-Rule" id="MF_00165"/>
    </source>
</evidence>
<reference key="1">
    <citation type="journal article" date="2004" name="Mol. Plant Microbe Interact.">
        <title>The genome sequence of the Gram-positive sugarcane pathogen Leifsonia xyli subsp. xyli.</title>
        <authorList>
            <person name="Monteiro-Vitorello C.B."/>
            <person name="Camargo L.E.A."/>
            <person name="Van Sluys M.A."/>
            <person name="Kitajima J.P."/>
            <person name="Truffi D."/>
            <person name="do Amaral A.M."/>
            <person name="Harakava R."/>
            <person name="de Oliveira J.C.F."/>
            <person name="Wood D."/>
            <person name="de Oliveira M.C."/>
            <person name="Miyaki C.Y."/>
            <person name="Takita M.A."/>
            <person name="da Silva A.C.R."/>
            <person name="Furlan L.R."/>
            <person name="Carraro D.M."/>
            <person name="Camarotte G."/>
            <person name="Almeida N.F. Jr."/>
            <person name="Carrer H."/>
            <person name="Coutinho L.L."/>
            <person name="El-Dorry H.A."/>
            <person name="Ferro M.I.T."/>
            <person name="Gagliardi P.R."/>
            <person name="Giglioti E."/>
            <person name="Goldman M.H.S."/>
            <person name="Goldman G.H."/>
            <person name="Kimura E.T."/>
            <person name="Ferro E.S."/>
            <person name="Kuramae E.E."/>
            <person name="Lemos E.G.M."/>
            <person name="Lemos M.V.F."/>
            <person name="Mauro S.M.Z."/>
            <person name="Machado M.A."/>
            <person name="Marino C.L."/>
            <person name="Menck C.F."/>
            <person name="Nunes L.R."/>
            <person name="Oliveira R.C."/>
            <person name="Pereira G.G."/>
            <person name="Siqueira W."/>
            <person name="de Souza A.A."/>
            <person name="Tsai S.M."/>
            <person name="Zanca A.S."/>
            <person name="Simpson A.J.G."/>
            <person name="Brumbley S.M."/>
            <person name="Setubal J.C."/>
        </authorList>
    </citation>
    <scope>NUCLEOTIDE SEQUENCE [LARGE SCALE GENOMIC DNA]</scope>
    <source>
        <strain>CTCB07</strain>
    </source>
</reference>
<proteinExistence type="inferred from homology"/>
<accession>Q6AGT5</accession>
<keyword id="KW-0067">ATP-binding</keyword>
<keyword id="KW-0418">Kinase</keyword>
<keyword id="KW-0545">Nucleotide biosynthesis</keyword>
<keyword id="KW-0547">Nucleotide-binding</keyword>
<keyword id="KW-1185">Reference proteome</keyword>
<keyword id="KW-0808">Transferase</keyword>
<comment type="function">
    <text evidence="1">Phosphorylation of dTMP to form dTDP in both de novo and salvage pathways of dTTP synthesis.</text>
</comment>
<comment type="catalytic activity">
    <reaction evidence="1">
        <text>dTMP + ATP = dTDP + ADP</text>
        <dbReference type="Rhea" id="RHEA:13517"/>
        <dbReference type="ChEBI" id="CHEBI:30616"/>
        <dbReference type="ChEBI" id="CHEBI:58369"/>
        <dbReference type="ChEBI" id="CHEBI:63528"/>
        <dbReference type="ChEBI" id="CHEBI:456216"/>
        <dbReference type="EC" id="2.7.4.9"/>
    </reaction>
</comment>
<comment type="similarity">
    <text evidence="1">Belongs to the thymidylate kinase family.</text>
</comment>
<name>KTHY_LEIXX</name>
<feature type="chain" id="PRO_0000155292" description="Thymidylate kinase">
    <location>
        <begin position="1"/>
        <end position="210"/>
    </location>
</feature>
<feature type="binding site" evidence="1">
    <location>
        <begin position="16"/>
        <end position="23"/>
    </location>
    <ligand>
        <name>ATP</name>
        <dbReference type="ChEBI" id="CHEBI:30616"/>
    </ligand>
</feature>
<sequence length="210" mass="23010">MSVPTNRPGLFITLEGGDGVGKSTQAALLERWLLGLGRAVVRTREPGGTDLGAEIREIVLHRRGDIAPRAEALLYAADRAHHVATVVRPALERGEVVLQDRYLDSSVAYQGAGRVLDAGEVRELSLWAAEGLLPDLTILLDLDETTARARLGSARTRYDRLEAERSEFHARVRAAYLALAAEPQRFLVVDASRPVEEIAAEIRCRLDGRV</sequence>
<gene>
    <name evidence="1" type="primary">tmk</name>
    <name type="ordered locus">Lxx04070</name>
</gene>